<evidence type="ECO:0000255" key="1">
    <source>
        <dbReference type="HAMAP-Rule" id="MF_00531"/>
    </source>
</evidence>
<evidence type="ECO:0000305" key="2"/>
<keyword id="KW-0150">Chloroplast</keyword>
<keyword id="KW-0934">Plastid</keyword>
<keyword id="KW-0687">Ribonucleoprotein</keyword>
<keyword id="KW-0689">Ribosomal protein</keyword>
<keyword id="KW-0694">RNA-binding</keyword>
<keyword id="KW-0699">rRNA-binding</keyword>
<reference key="1">
    <citation type="journal article" date="2005" name="Mol. Biol. Evol.">
        <title>The chloroplast genome sequence of the green alga Pseudendoclonium akinetum (Ulvophyceae) reveals unusual structural features and new insights into the branching order of chlorophyte lineages.</title>
        <authorList>
            <person name="Pombert J.-F."/>
            <person name="Otis C."/>
            <person name="Lemieux C."/>
            <person name="Turmel M."/>
        </authorList>
    </citation>
    <scope>NUCLEOTIDE SEQUENCE [LARGE SCALE GENOMIC DNA]</scope>
    <source>
        <strain>UTEX 1912</strain>
    </source>
</reference>
<proteinExistence type="inferred from homology"/>
<sequence>MSRSLKKGPFVANHLLKKVQKLNDLDEKQVIKTWSRSSVIIPIMIGHTISIHNGKEHIPLYITDLMVGHKLGEFAPTRTFKGHIKKDKKSKR</sequence>
<gene>
    <name evidence="1" type="primary">rps19</name>
</gene>
<feature type="chain" id="PRO_0000276921" description="Small ribosomal subunit protein uS19c">
    <location>
        <begin position="1"/>
        <end position="92"/>
    </location>
</feature>
<geneLocation type="chloroplast"/>
<accession>Q3ZJ86</accession>
<organism>
    <name type="scientific">Tupiella akineta</name>
    <name type="common">Green alga</name>
    <name type="synonym">Pseudendoclonium akinetum</name>
    <dbReference type="NCBI Taxonomy" id="160070"/>
    <lineage>
        <taxon>Eukaryota</taxon>
        <taxon>Viridiplantae</taxon>
        <taxon>Chlorophyta</taxon>
        <taxon>Ulvophyceae</taxon>
        <taxon>OUU clade</taxon>
        <taxon>Ulotrichales</taxon>
        <taxon>Tupiellaceae</taxon>
        <taxon>Tupiella</taxon>
    </lineage>
</organism>
<protein>
    <recommendedName>
        <fullName evidence="1">Small ribosomal subunit protein uS19c</fullName>
    </recommendedName>
    <alternativeName>
        <fullName evidence="2">30S ribosomal protein S19, chloroplastic</fullName>
    </alternativeName>
</protein>
<name>RR19_TUPAK</name>
<dbReference type="EMBL" id="AY835431">
    <property type="protein sequence ID" value="AAV80605.1"/>
    <property type="molecule type" value="Genomic_DNA"/>
</dbReference>
<dbReference type="RefSeq" id="YP_636181.1">
    <property type="nucleotide sequence ID" value="NC_008114.1"/>
</dbReference>
<dbReference type="SMR" id="Q3ZJ86"/>
<dbReference type="GeneID" id="4108785"/>
<dbReference type="GO" id="GO:0009507">
    <property type="term" value="C:chloroplast"/>
    <property type="evidence" value="ECO:0007669"/>
    <property type="project" value="UniProtKB-SubCell"/>
</dbReference>
<dbReference type="GO" id="GO:0005763">
    <property type="term" value="C:mitochondrial small ribosomal subunit"/>
    <property type="evidence" value="ECO:0007669"/>
    <property type="project" value="TreeGrafter"/>
</dbReference>
<dbReference type="GO" id="GO:0019843">
    <property type="term" value="F:rRNA binding"/>
    <property type="evidence" value="ECO:0007669"/>
    <property type="project" value="UniProtKB-UniRule"/>
</dbReference>
<dbReference type="GO" id="GO:0003735">
    <property type="term" value="F:structural constituent of ribosome"/>
    <property type="evidence" value="ECO:0007669"/>
    <property type="project" value="InterPro"/>
</dbReference>
<dbReference type="GO" id="GO:0000028">
    <property type="term" value="P:ribosomal small subunit assembly"/>
    <property type="evidence" value="ECO:0007669"/>
    <property type="project" value="TreeGrafter"/>
</dbReference>
<dbReference type="GO" id="GO:0006412">
    <property type="term" value="P:translation"/>
    <property type="evidence" value="ECO:0007669"/>
    <property type="project" value="UniProtKB-UniRule"/>
</dbReference>
<dbReference type="FunFam" id="3.30.860.10:FF:000001">
    <property type="entry name" value="30S ribosomal protein S19"/>
    <property type="match status" value="1"/>
</dbReference>
<dbReference type="Gene3D" id="3.30.860.10">
    <property type="entry name" value="30s Ribosomal Protein S19, Chain A"/>
    <property type="match status" value="1"/>
</dbReference>
<dbReference type="HAMAP" id="MF_00531">
    <property type="entry name" value="Ribosomal_uS19"/>
    <property type="match status" value="1"/>
</dbReference>
<dbReference type="InterPro" id="IPR002222">
    <property type="entry name" value="Ribosomal_uS19"/>
</dbReference>
<dbReference type="InterPro" id="IPR005732">
    <property type="entry name" value="Ribosomal_uS19_bac-type"/>
</dbReference>
<dbReference type="InterPro" id="IPR020934">
    <property type="entry name" value="Ribosomal_uS19_CS"/>
</dbReference>
<dbReference type="InterPro" id="IPR023575">
    <property type="entry name" value="Ribosomal_uS19_SF"/>
</dbReference>
<dbReference type="NCBIfam" id="TIGR01050">
    <property type="entry name" value="rpsS_bact"/>
    <property type="match status" value="1"/>
</dbReference>
<dbReference type="PANTHER" id="PTHR11880">
    <property type="entry name" value="RIBOSOMAL PROTEIN S19P FAMILY MEMBER"/>
    <property type="match status" value="1"/>
</dbReference>
<dbReference type="PANTHER" id="PTHR11880:SF8">
    <property type="entry name" value="SMALL RIBOSOMAL SUBUNIT PROTEIN US19M"/>
    <property type="match status" value="1"/>
</dbReference>
<dbReference type="Pfam" id="PF00203">
    <property type="entry name" value="Ribosomal_S19"/>
    <property type="match status" value="1"/>
</dbReference>
<dbReference type="PIRSF" id="PIRSF002144">
    <property type="entry name" value="Ribosomal_S19"/>
    <property type="match status" value="1"/>
</dbReference>
<dbReference type="PRINTS" id="PR00975">
    <property type="entry name" value="RIBOSOMALS19"/>
</dbReference>
<dbReference type="SUPFAM" id="SSF54570">
    <property type="entry name" value="Ribosomal protein S19"/>
    <property type="match status" value="1"/>
</dbReference>
<dbReference type="PROSITE" id="PS00323">
    <property type="entry name" value="RIBOSOMAL_S19"/>
    <property type="match status" value="1"/>
</dbReference>
<comment type="function">
    <text evidence="1">Protein S19 forms a complex with S13 that binds strongly to the 16S ribosomal RNA.</text>
</comment>
<comment type="subcellular location">
    <subcellularLocation>
        <location>Plastid</location>
        <location>Chloroplast</location>
    </subcellularLocation>
</comment>
<comment type="similarity">
    <text evidence="1">Belongs to the universal ribosomal protein uS19 family.</text>
</comment>